<proteinExistence type="inferred from homology"/>
<feature type="chain" id="PRO_0000341893" description="2-succinyl-5-enolpyruvyl-6-hydroxy-3-cyclohexene-1-carboxylate synthase">
    <location>
        <begin position="1"/>
        <end position="567"/>
    </location>
</feature>
<protein>
    <recommendedName>
        <fullName evidence="1">2-succinyl-5-enolpyruvyl-6-hydroxy-3-cyclohexene-1-carboxylate synthase</fullName>
        <shortName evidence="1">SEPHCHC synthase</shortName>
        <ecNumber evidence="1">2.2.1.9</ecNumber>
    </recommendedName>
    <alternativeName>
        <fullName evidence="1">Menaquinone biosynthesis protein MenD</fullName>
    </alternativeName>
</protein>
<name>MEND_YERPN</name>
<accession>Q1CHS9</accession>
<accession>C4GV40</accession>
<evidence type="ECO:0000255" key="1">
    <source>
        <dbReference type="HAMAP-Rule" id="MF_01659"/>
    </source>
</evidence>
<gene>
    <name evidence="1" type="primary">menD</name>
    <name type="ordered locus">YPN_2122</name>
    <name type="ORF">YP516_2365</name>
</gene>
<dbReference type="EC" id="2.2.1.9" evidence="1"/>
<dbReference type="EMBL" id="CP000305">
    <property type="protein sequence ID" value="ABG18451.1"/>
    <property type="molecule type" value="Genomic_DNA"/>
</dbReference>
<dbReference type="EMBL" id="ACNQ01000013">
    <property type="protein sequence ID" value="EEO76168.1"/>
    <property type="molecule type" value="Genomic_DNA"/>
</dbReference>
<dbReference type="RefSeq" id="WP_002210247.1">
    <property type="nucleotide sequence ID" value="NZ_ACNQ01000013.1"/>
</dbReference>
<dbReference type="SMR" id="Q1CHS9"/>
<dbReference type="GeneID" id="57976160"/>
<dbReference type="KEGG" id="ypn:YPN_2122"/>
<dbReference type="HOGENOM" id="CLU_006051_3_0_6"/>
<dbReference type="UniPathway" id="UPA00079"/>
<dbReference type="UniPathway" id="UPA01057">
    <property type="reaction ID" value="UER00164"/>
</dbReference>
<dbReference type="Proteomes" id="UP000008936">
    <property type="component" value="Chromosome"/>
</dbReference>
<dbReference type="GO" id="GO:0070204">
    <property type="term" value="F:2-succinyl-5-enolpyruvyl-6-hydroxy-3-cyclohexene-1-carboxylic-acid synthase activity"/>
    <property type="evidence" value="ECO:0007669"/>
    <property type="project" value="UniProtKB-UniRule"/>
</dbReference>
<dbReference type="GO" id="GO:0000287">
    <property type="term" value="F:magnesium ion binding"/>
    <property type="evidence" value="ECO:0007669"/>
    <property type="project" value="UniProtKB-UniRule"/>
</dbReference>
<dbReference type="GO" id="GO:0030145">
    <property type="term" value="F:manganese ion binding"/>
    <property type="evidence" value="ECO:0007669"/>
    <property type="project" value="UniProtKB-UniRule"/>
</dbReference>
<dbReference type="GO" id="GO:0030976">
    <property type="term" value="F:thiamine pyrophosphate binding"/>
    <property type="evidence" value="ECO:0007669"/>
    <property type="project" value="UniProtKB-UniRule"/>
</dbReference>
<dbReference type="GO" id="GO:0009234">
    <property type="term" value="P:menaquinone biosynthetic process"/>
    <property type="evidence" value="ECO:0007669"/>
    <property type="project" value="UniProtKB-UniRule"/>
</dbReference>
<dbReference type="CDD" id="cd07037">
    <property type="entry name" value="TPP_PYR_MenD"/>
    <property type="match status" value="1"/>
</dbReference>
<dbReference type="CDD" id="cd02009">
    <property type="entry name" value="TPP_SHCHC_synthase"/>
    <property type="match status" value="1"/>
</dbReference>
<dbReference type="FunFam" id="3.40.50.970:FF:000029">
    <property type="entry name" value="2-succinyl-5-enolpyruvyl-6-hydroxy-3-cyclohexene-1-carboxylate synthase"/>
    <property type="match status" value="1"/>
</dbReference>
<dbReference type="Gene3D" id="3.40.50.970">
    <property type="match status" value="2"/>
</dbReference>
<dbReference type="Gene3D" id="3.40.50.1220">
    <property type="entry name" value="TPP-binding domain"/>
    <property type="match status" value="1"/>
</dbReference>
<dbReference type="HAMAP" id="MF_01659">
    <property type="entry name" value="MenD"/>
    <property type="match status" value="1"/>
</dbReference>
<dbReference type="InterPro" id="IPR004433">
    <property type="entry name" value="MenaQ_synth_MenD"/>
</dbReference>
<dbReference type="InterPro" id="IPR032264">
    <property type="entry name" value="MenD_middle"/>
</dbReference>
<dbReference type="InterPro" id="IPR029061">
    <property type="entry name" value="THDP-binding"/>
</dbReference>
<dbReference type="InterPro" id="IPR012001">
    <property type="entry name" value="Thiamin_PyroP_enz_TPP-bd_dom"/>
</dbReference>
<dbReference type="InterPro" id="IPR011766">
    <property type="entry name" value="TPP_enzyme_TPP-bd"/>
</dbReference>
<dbReference type="NCBIfam" id="TIGR00173">
    <property type="entry name" value="menD"/>
    <property type="match status" value="1"/>
</dbReference>
<dbReference type="PANTHER" id="PTHR42916">
    <property type="entry name" value="2-SUCCINYL-5-ENOLPYRUVYL-6-HYDROXY-3-CYCLOHEXENE-1-CARBOXYLATE SYNTHASE"/>
    <property type="match status" value="1"/>
</dbReference>
<dbReference type="PANTHER" id="PTHR42916:SF1">
    <property type="entry name" value="PROTEIN PHYLLO, CHLOROPLASTIC"/>
    <property type="match status" value="1"/>
</dbReference>
<dbReference type="Pfam" id="PF02775">
    <property type="entry name" value="TPP_enzyme_C"/>
    <property type="match status" value="1"/>
</dbReference>
<dbReference type="Pfam" id="PF16582">
    <property type="entry name" value="TPP_enzyme_M_2"/>
    <property type="match status" value="1"/>
</dbReference>
<dbReference type="Pfam" id="PF02776">
    <property type="entry name" value="TPP_enzyme_N"/>
    <property type="match status" value="1"/>
</dbReference>
<dbReference type="PIRSF" id="PIRSF004983">
    <property type="entry name" value="MenD"/>
    <property type="match status" value="1"/>
</dbReference>
<dbReference type="SUPFAM" id="SSF52518">
    <property type="entry name" value="Thiamin diphosphate-binding fold (THDP-binding)"/>
    <property type="match status" value="2"/>
</dbReference>
<keyword id="KW-0460">Magnesium</keyword>
<keyword id="KW-0464">Manganese</keyword>
<keyword id="KW-0474">Menaquinone biosynthesis</keyword>
<keyword id="KW-0479">Metal-binding</keyword>
<keyword id="KW-0786">Thiamine pyrophosphate</keyword>
<keyword id="KW-0808">Transferase</keyword>
<comment type="function">
    <text evidence="1">Catalyzes the thiamine diphosphate-dependent decarboxylation of 2-oxoglutarate and the subsequent addition of the resulting succinic semialdehyde-thiamine pyrophosphate anion to isochorismate to yield 2-succinyl-5-enolpyruvyl-6-hydroxy-3-cyclohexene-1-carboxylate (SEPHCHC).</text>
</comment>
<comment type="catalytic activity">
    <reaction evidence="1">
        <text>isochorismate + 2-oxoglutarate + H(+) = 5-enolpyruvoyl-6-hydroxy-2-succinyl-cyclohex-3-ene-1-carboxylate + CO2</text>
        <dbReference type="Rhea" id="RHEA:25593"/>
        <dbReference type="ChEBI" id="CHEBI:15378"/>
        <dbReference type="ChEBI" id="CHEBI:16526"/>
        <dbReference type="ChEBI" id="CHEBI:16810"/>
        <dbReference type="ChEBI" id="CHEBI:29780"/>
        <dbReference type="ChEBI" id="CHEBI:58818"/>
        <dbReference type="EC" id="2.2.1.9"/>
    </reaction>
</comment>
<comment type="cofactor">
    <cofactor evidence="1">
        <name>Mg(2+)</name>
        <dbReference type="ChEBI" id="CHEBI:18420"/>
    </cofactor>
    <cofactor evidence="1">
        <name>Mn(2+)</name>
        <dbReference type="ChEBI" id="CHEBI:29035"/>
    </cofactor>
</comment>
<comment type="cofactor">
    <cofactor evidence="1">
        <name>thiamine diphosphate</name>
        <dbReference type="ChEBI" id="CHEBI:58937"/>
    </cofactor>
    <text evidence="1">Binds 1 thiamine pyrophosphate per subunit.</text>
</comment>
<comment type="pathway">
    <text evidence="1">Quinol/quinone metabolism; 1,4-dihydroxy-2-naphthoate biosynthesis; 1,4-dihydroxy-2-naphthoate from chorismate: step 2/7.</text>
</comment>
<comment type="pathway">
    <text evidence="1">Quinol/quinone metabolism; menaquinone biosynthesis.</text>
</comment>
<comment type="subunit">
    <text evidence="1">Homodimer.</text>
</comment>
<comment type="similarity">
    <text evidence="1">Belongs to the TPP enzyme family. MenD subfamily.</text>
</comment>
<reference key="1">
    <citation type="journal article" date="2006" name="J. Bacteriol.">
        <title>Complete genome sequence of Yersinia pestis strains Antiqua and Nepal516: evidence of gene reduction in an emerging pathogen.</title>
        <authorList>
            <person name="Chain P.S.G."/>
            <person name="Hu P."/>
            <person name="Malfatti S.A."/>
            <person name="Radnedge L."/>
            <person name="Larimer F."/>
            <person name="Vergez L.M."/>
            <person name="Worsham P."/>
            <person name="Chu M.C."/>
            <person name="Andersen G.L."/>
        </authorList>
    </citation>
    <scope>NUCLEOTIDE SEQUENCE [LARGE SCALE GENOMIC DNA]</scope>
    <source>
        <strain>Nepal516</strain>
    </source>
</reference>
<reference key="2">
    <citation type="submission" date="2009-04" db="EMBL/GenBank/DDBJ databases">
        <title>Yersinia pestis Nepal516A whole genome shotgun sequencing project.</title>
        <authorList>
            <person name="Plunkett G. III"/>
            <person name="Anderson B.D."/>
            <person name="Baumler D.J."/>
            <person name="Burland V."/>
            <person name="Cabot E.L."/>
            <person name="Glasner J.D."/>
            <person name="Mau B."/>
            <person name="Neeno-Eckwall E."/>
            <person name="Perna N.T."/>
            <person name="Munk A.C."/>
            <person name="Tapia R."/>
            <person name="Green L.D."/>
            <person name="Rogers Y.C."/>
            <person name="Detter J.C."/>
            <person name="Bruce D.C."/>
            <person name="Brettin T.S."/>
        </authorList>
    </citation>
    <scope>NUCLEOTIDE SEQUENCE [LARGE SCALE GENOMIC DNA]</scope>
    <source>
        <strain>Nepal516</strain>
    </source>
</reference>
<sequence>MSTSVFNRRWAALLLEALTRHGVRHICIAPGSRSTPLTLAAAANPSLVCHTHFDERGLGHLALGLAKASTEPVAVIVTSGTAVANLYPALIEAGLTGERLILLTADRPPELIDCGANQAIRQQGLFASHPTLSVNLPRPTPDISARWLVSTLDSAMAQLQHGALHINCPFAEPLYGGDEQQYADWSASLGDWWQDCHPWLRQTCYPPSLYQPPAQQADWFFWRQKRGVVIAGRMGAQEGRQLTAWAAMLGWPLIGDVLSQTGQPLPCADLWLAHPRAQETLAQAQMVLQFGSSLTSKRLLQWQTACQPQEYWLVDSAPGRLDPANHRGRRIICPVGEWLSRHPAQRRTPWATELAAYSESAQAQVIETLAGQFSEAAVAHQLAELLPDNGQLFVGNSLIVRLIDALGQLPAGYPVYSNRGASGIDGLLSTAAGVQRATAKPTLAIVGDLSALYDLNALALLRQSSAPMVLLVINNNGGQIFSLLPTPEAERQRFYCMPQDVNFEHAAVMFSLGYARPNSWPQLRELAHQCWLRGGTTLIEVQVPPSQGAETLQQLVQQVTLIPQVAP</sequence>
<organism>
    <name type="scientific">Yersinia pestis bv. Antiqua (strain Nepal516)</name>
    <dbReference type="NCBI Taxonomy" id="377628"/>
    <lineage>
        <taxon>Bacteria</taxon>
        <taxon>Pseudomonadati</taxon>
        <taxon>Pseudomonadota</taxon>
        <taxon>Gammaproteobacteria</taxon>
        <taxon>Enterobacterales</taxon>
        <taxon>Yersiniaceae</taxon>
        <taxon>Yersinia</taxon>
    </lineage>
</organism>